<proteinExistence type="inferred from homology"/>
<keyword id="KW-0963">Cytoplasm</keyword>
<keyword id="KW-0210">Decarboxylase</keyword>
<keyword id="KW-0456">Lyase</keyword>
<keyword id="KW-0627">Porphyrin biosynthesis</keyword>
<organism>
    <name type="scientific">Prochlorococcus marinus (strain MIT 9515)</name>
    <dbReference type="NCBI Taxonomy" id="167542"/>
    <lineage>
        <taxon>Bacteria</taxon>
        <taxon>Bacillati</taxon>
        <taxon>Cyanobacteriota</taxon>
        <taxon>Cyanophyceae</taxon>
        <taxon>Synechococcales</taxon>
        <taxon>Prochlorococcaceae</taxon>
        <taxon>Prochlorococcus</taxon>
    </lineage>
</organism>
<name>DCUP_PROM5</name>
<feature type="chain" id="PRO_1000023939" description="Uroporphyrinogen decarboxylase">
    <location>
        <begin position="1"/>
        <end position="346"/>
    </location>
</feature>
<feature type="binding site" evidence="1">
    <location>
        <begin position="26"/>
        <end position="30"/>
    </location>
    <ligand>
        <name>substrate</name>
    </ligand>
</feature>
<feature type="binding site" evidence="1">
    <location>
        <position position="76"/>
    </location>
    <ligand>
        <name>substrate</name>
    </ligand>
</feature>
<feature type="binding site" evidence="1">
    <location>
        <position position="153"/>
    </location>
    <ligand>
        <name>substrate</name>
    </ligand>
</feature>
<feature type="binding site" evidence="1">
    <location>
        <position position="208"/>
    </location>
    <ligand>
        <name>substrate</name>
    </ligand>
</feature>
<feature type="binding site" evidence="1">
    <location>
        <position position="323"/>
    </location>
    <ligand>
        <name>substrate</name>
    </ligand>
</feature>
<feature type="site" description="Transition state stabilizer" evidence="1">
    <location>
        <position position="76"/>
    </location>
</feature>
<comment type="function">
    <text evidence="1">Catalyzes the decarboxylation of four acetate groups of uroporphyrinogen-III to yield coproporphyrinogen-III.</text>
</comment>
<comment type="catalytic activity">
    <reaction evidence="1">
        <text>uroporphyrinogen III + 4 H(+) = coproporphyrinogen III + 4 CO2</text>
        <dbReference type="Rhea" id="RHEA:19865"/>
        <dbReference type="ChEBI" id="CHEBI:15378"/>
        <dbReference type="ChEBI" id="CHEBI:16526"/>
        <dbReference type="ChEBI" id="CHEBI:57308"/>
        <dbReference type="ChEBI" id="CHEBI:57309"/>
        <dbReference type="EC" id="4.1.1.37"/>
    </reaction>
</comment>
<comment type="pathway">
    <text evidence="1">Porphyrin-containing compound metabolism; protoporphyrin-IX biosynthesis; coproporphyrinogen-III from 5-aminolevulinate: step 4/4.</text>
</comment>
<comment type="subunit">
    <text evidence="1">Homodimer.</text>
</comment>
<comment type="subcellular location">
    <subcellularLocation>
        <location evidence="1">Cytoplasm</location>
    </subcellularLocation>
</comment>
<comment type="similarity">
    <text evidence="1">Belongs to the uroporphyrinogen decarboxylase family.</text>
</comment>
<evidence type="ECO:0000255" key="1">
    <source>
        <dbReference type="HAMAP-Rule" id="MF_00218"/>
    </source>
</evidence>
<sequence>MGENLPLLLSAALGKKVNRPPVWMMRQAGRYMKIYRDLRERYPSFRERSENPELSYQISMQPFKAFKPDGVILFSDILTPLPGMGINFEIIESKGPIIENPIKNIHQIENLKELVPSESLSFVGEVLSSLKKDVNNEATVLGFVGAPWTLAAYVVEGKSSKNYSLIKSMAFKEPDLLHKLLDHFAKSIGEYLKYQIKSGAQVVQIFDSWAGQLSPQDYDIFAGPYQKKVVDIVKEKYPETPIILYISGSAGLLERMARTGVDIISLDWTVDIEEACKRIPEGIGIQGNVDPGLLFGNKESIKERIDITFNKSKGRKYILNLGHGILPGTPEENAQTFFEHGKKLTY</sequence>
<gene>
    <name evidence="1" type="primary">hemE</name>
    <name type="ordered locus">P9515_06481</name>
</gene>
<accession>A2BVP6</accession>
<dbReference type="EC" id="4.1.1.37" evidence="1"/>
<dbReference type="EMBL" id="CP000552">
    <property type="protein sequence ID" value="ABM71857.1"/>
    <property type="molecule type" value="Genomic_DNA"/>
</dbReference>
<dbReference type="RefSeq" id="WP_011819962.1">
    <property type="nucleotide sequence ID" value="NC_008817.1"/>
</dbReference>
<dbReference type="SMR" id="A2BVP6"/>
<dbReference type="STRING" id="167542.P9515_06481"/>
<dbReference type="GeneID" id="60200882"/>
<dbReference type="KEGG" id="pmc:P9515_06481"/>
<dbReference type="eggNOG" id="COG0407">
    <property type="taxonomic scope" value="Bacteria"/>
</dbReference>
<dbReference type="HOGENOM" id="CLU_040933_0_2_3"/>
<dbReference type="OrthoDB" id="9806656at2"/>
<dbReference type="UniPathway" id="UPA00251">
    <property type="reaction ID" value="UER00321"/>
</dbReference>
<dbReference type="Proteomes" id="UP000001589">
    <property type="component" value="Chromosome"/>
</dbReference>
<dbReference type="GO" id="GO:0005737">
    <property type="term" value="C:cytoplasm"/>
    <property type="evidence" value="ECO:0007669"/>
    <property type="project" value="UniProtKB-SubCell"/>
</dbReference>
<dbReference type="GO" id="GO:0004853">
    <property type="term" value="F:uroporphyrinogen decarboxylase activity"/>
    <property type="evidence" value="ECO:0007669"/>
    <property type="project" value="UniProtKB-UniRule"/>
</dbReference>
<dbReference type="GO" id="GO:0006782">
    <property type="term" value="P:protoporphyrinogen IX biosynthetic process"/>
    <property type="evidence" value="ECO:0007669"/>
    <property type="project" value="UniProtKB-UniRule"/>
</dbReference>
<dbReference type="CDD" id="cd00717">
    <property type="entry name" value="URO-D"/>
    <property type="match status" value="1"/>
</dbReference>
<dbReference type="FunFam" id="3.20.20.210:FF:000006">
    <property type="entry name" value="Uroporphyrinogen decarboxylase"/>
    <property type="match status" value="1"/>
</dbReference>
<dbReference type="Gene3D" id="3.20.20.210">
    <property type="match status" value="1"/>
</dbReference>
<dbReference type="HAMAP" id="MF_00218">
    <property type="entry name" value="URO_D"/>
    <property type="match status" value="1"/>
</dbReference>
<dbReference type="InterPro" id="IPR038071">
    <property type="entry name" value="UROD/MetE-like_sf"/>
</dbReference>
<dbReference type="InterPro" id="IPR006361">
    <property type="entry name" value="Uroporphyrinogen_deCO2ase_HemE"/>
</dbReference>
<dbReference type="InterPro" id="IPR000257">
    <property type="entry name" value="Uroporphyrinogen_deCOase"/>
</dbReference>
<dbReference type="NCBIfam" id="TIGR01464">
    <property type="entry name" value="hemE"/>
    <property type="match status" value="1"/>
</dbReference>
<dbReference type="PANTHER" id="PTHR21091">
    <property type="entry name" value="METHYLTETRAHYDROFOLATE:HOMOCYSTEINE METHYLTRANSFERASE RELATED"/>
    <property type="match status" value="1"/>
</dbReference>
<dbReference type="PANTHER" id="PTHR21091:SF169">
    <property type="entry name" value="UROPORPHYRINOGEN DECARBOXYLASE"/>
    <property type="match status" value="1"/>
</dbReference>
<dbReference type="Pfam" id="PF01208">
    <property type="entry name" value="URO-D"/>
    <property type="match status" value="1"/>
</dbReference>
<dbReference type="SUPFAM" id="SSF51726">
    <property type="entry name" value="UROD/MetE-like"/>
    <property type="match status" value="1"/>
</dbReference>
<dbReference type="PROSITE" id="PS00906">
    <property type="entry name" value="UROD_1"/>
    <property type="match status" value="1"/>
</dbReference>
<dbReference type="PROSITE" id="PS00907">
    <property type="entry name" value="UROD_2"/>
    <property type="match status" value="1"/>
</dbReference>
<protein>
    <recommendedName>
        <fullName evidence="1">Uroporphyrinogen decarboxylase</fullName>
        <shortName evidence="1">UPD</shortName>
        <shortName evidence="1">URO-D</shortName>
        <ecNumber evidence="1">4.1.1.37</ecNumber>
    </recommendedName>
</protein>
<reference key="1">
    <citation type="journal article" date="2007" name="PLoS Genet.">
        <title>Patterns and implications of gene gain and loss in the evolution of Prochlorococcus.</title>
        <authorList>
            <person name="Kettler G.C."/>
            <person name="Martiny A.C."/>
            <person name="Huang K."/>
            <person name="Zucker J."/>
            <person name="Coleman M.L."/>
            <person name="Rodrigue S."/>
            <person name="Chen F."/>
            <person name="Lapidus A."/>
            <person name="Ferriera S."/>
            <person name="Johnson J."/>
            <person name="Steglich C."/>
            <person name="Church G.M."/>
            <person name="Richardson P."/>
            <person name="Chisholm S.W."/>
        </authorList>
    </citation>
    <scope>NUCLEOTIDE SEQUENCE [LARGE SCALE GENOMIC DNA]</scope>
    <source>
        <strain>MIT 9515</strain>
    </source>
</reference>